<organism>
    <name type="scientific">Methanocaldococcus jannaschii (strain ATCC 43067 / DSM 2661 / JAL-1 / JCM 10045 / NBRC 100440)</name>
    <name type="common">Methanococcus jannaschii</name>
    <dbReference type="NCBI Taxonomy" id="243232"/>
    <lineage>
        <taxon>Archaea</taxon>
        <taxon>Methanobacteriati</taxon>
        <taxon>Methanobacteriota</taxon>
        <taxon>Methanomada group</taxon>
        <taxon>Methanococci</taxon>
        <taxon>Methanococcales</taxon>
        <taxon>Methanocaldococcaceae</taxon>
        <taxon>Methanocaldococcus</taxon>
    </lineage>
</organism>
<accession>Q57684</accession>
<feature type="chain" id="PRO_0000106752" description="Uncharacterized protein MJ0231">
    <location>
        <begin position="1"/>
        <end position="416"/>
    </location>
</feature>
<reference key="1">
    <citation type="journal article" date="1996" name="Science">
        <title>Complete genome sequence of the methanogenic archaeon, Methanococcus jannaschii.</title>
        <authorList>
            <person name="Bult C.J."/>
            <person name="White O."/>
            <person name="Olsen G.J."/>
            <person name="Zhou L."/>
            <person name="Fleischmann R.D."/>
            <person name="Sutton G.G."/>
            <person name="Blake J.A."/>
            <person name="FitzGerald L.M."/>
            <person name="Clayton R.A."/>
            <person name="Gocayne J.D."/>
            <person name="Kerlavage A.R."/>
            <person name="Dougherty B.A."/>
            <person name="Tomb J.-F."/>
            <person name="Adams M.D."/>
            <person name="Reich C.I."/>
            <person name="Overbeek R."/>
            <person name="Kirkness E.F."/>
            <person name="Weinstock K.G."/>
            <person name="Merrick J.M."/>
            <person name="Glodek A."/>
            <person name="Scott J.L."/>
            <person name="Geoghagen N.S.M."/>
            <person name="Weidman J.F."/>
            <person name="Fuhrmann J.L."/>
            <person name="Nguyen D."/>
            <person name="Utterback T.R."/>
            <person name="Kelley J.M."/>
            <person name="Peterson J.D."/>
            <person name="Sadow P.W."/>
            <person name="Hanna M.C."/>
            <person name="Cotton M.D."/>
            <person name="Roberts K.M."/>
            <person name="Hurst M.A."/>
            <person name="Kaine B.P."/>
            <person name="Borodovsky M."/>
            <person name="Klenk H.-P."/>
            <person name="Fraser C.M."/>
            <person name="Smith H.O."/>
            <person name="Woese C.R."/>
            <person name="Venter J.C."/>
        </authorList>
    </citation>
    <scope>NUCLEOTIDE SEQUENCE [LARGE SCALE GENOMIC DNA]</scope>
    <source>
        <strain>ATCC 43067 / DSM 2661 / JAL-1 / JCM 10045 / NBRC 100440</strain>
    </source>
</reference>
<proteinExistence type="predicted"/>
<keyword id="KW-1185">Reference proteome</keyword>
<dbReference type="EMBL" id="L77117">
    <property type="protein sequence ID" value="AAB98219.1"/>
    <property type="molecule type" value="Genomic_DNA"/>
</dbReference>
<dbReference type="PIR" id="H64328">
    <property type="entry name" value="H64328"/>
</dbReference>
<dbReference type="RefSeq" id="WP_010869729.1">
    <property type="nucleotide sequence ID" value="NC_000909.1"/>
</dbReference>
<dbReference type="SMR" id="Q57684"/>
<dbReference type="STRING" id="243232.MJ_0231"/>
<dbReference type="PaxDb" id="243232-MJ_0231"/>
<dbReference type="EnsemblBacteria" id="AAB98219">
    <property type="protein sequence ID" value="AAB98219"/>
    <property type="gene ID" value="MJ_0231"/>
</dbReference>
<dbReference type="GeneID" id="1451084"/>
<dbReference type="KEGG" id="mja:MJ_0231"/>
<dbReference type="eggNOG" id="arCOG00322">
    <property type="taxonomic scope" value="Archaea"/>
</dbReference>
<dbReference type="HOGENOM" id="CLU_026425_4_2_2"/>
<dbReference type="InParanoid" id="Q57684"/>
<dbReference type="OrthoDB" id="84520at2157"/>
<dbReference type="PhylomeDB" id="Q57684"/>
<dbReference type="Proteomes" id="UP000000805">
    <property type="component" value="Chromosome"/>
</dbReference>
<dbReference type="GO" id="GO:0005829">
    <property type="term" value="C:cytosol"/>
    <property type="evidence" value="ECO:0000318"/>
    <property type="project" value="GO_Central"/>
</dbReference>
<dbReference type="GO" id="GO:0008237">
    <property type="term" value="F:metallopeptidase activity"/>
    <property type="evidence" value="ECO:0007669"/>
    <property type="project" value="InterPro"/>
</dbReference>
<dbReference type="GO" id="GO:0006508">
    <property type="term" value="P:proteolysis"/>
    <property type="evidence" value="ECO:0007669"/>
    <property type="project" value="InterPro"/>
</dbReference>
<dbReference type="FunFam" id="3.30.2290.10:FF:000005">
    <property type="entry name" value="Peptidase U62 modulator of DNA gyrase"/>
    <property type="match status" value="1"/>
</dbReference>
<dbReference type="Gene3D" id="3.30.2290.10">
    <property type="entry name" value="PmbA/TldD superfamily"/>
    <property type="match status" value="1"/>
</dbReference>
<dbReference type="InterPro" id="IPR045569">
    <property type="entry name" value="Metalloprtase-TldD/E_C"/>
</dbReference>
<dbReference type="InterPro" id="IPR045570">
    <property type="entry name" value="Metalloprtase-TldD/E_cen_dom"/>
</dbReference>
<dbReference type="InterPro" id="IPR002510">
    <property type="entry name" value="Metalloprtase-TldD/E_N"/>
</dbReference>
<dbReference type="InterPro" id="IPR047657">
    <property type="entry name" value="PmbA"/>
</dbReference>
<dbReference type="InterPro" id="IPR035068">
    <property type="entry name" value="TldD/PmbA_N"/>
</dbReference>
<dbReference type="InterPro" id="IPR036059">
    <property type="entry name" value="TldD/PmbA_sf"/>
</dbReference>
<dbReference type="PANTHER" id="PTHR43421">
    <property type="entry name" value="METALLOPROTEASE PMBA"/>
    <property type="match status" value="1"/>
</dbReference>
<dbReference type="PANTHER" id="PTHR43421:SF1">
    <property type="entry name" value="METALLOPROTEASE PMBA"/>
    <property type="match status" value="1"/>
</dbReference>
<dbReference type="Pfam" id="PF01523">
    <property type="entry name" value="PmbA_TldD_1st"/>
    <property type="match status" value="1"/>
</dbReference>
<dbReference type="Pfam" id="PF19290">
    <property type="entry name" value="PmbA_TldD_2nd"/>
    <property type="match status" value="1"/>
</dbReference>
<dbReference type="Pfam" id="PF19289">
    <property type="entry name" value="PmbA_TldD_3rd"/>
    <property type="match status" value="1"/>
</dbReference>
<dbReference type="SUPFAM" id="SSF111283">
    <property type="entry name" value="Putative modulator of DNA gyrase, PmbA/TldD"/>
    <property type="match status" value="1"/>
</dbReference>
<protein>
    <recommendedName>
        <fullName>Uncharacterized protein MJ0231</fullName>
    </recommendedName>
</protein>
<gene>
    <name type="ordered locus">MJ0231</name>
</gene>
<name>Y231_METJA</name>
<sequence length="416" mass="46661">MDLEKLIKIGEKEGFETEVLFVKSYEVSVDLDGKSVDSFQTGISYGIGVRVIKDGKVGFAYANKFDENIVYKAMKNLVEDKYTEFAHPQKYKEPKGMFYKEILDLDEEKLLEDLITMRDIALDNNAIVLSGGVSKEVGYARLINSNGVDVEEQDTYFSAAISIMYDGETSYECRTRHNIFDVEEISYRALDLAKKSANGKAISYKGNIVLSPRALYDLLSYTLMPAFSAENVQRDRSVLKGKIGEQIFGENITIIDDGTLDYALYSSKCDGEGTATQKTVLVENGVLKNYLYDIKRANREGKTSTGNASRGYRSLPYVSPTNFIIKETKNSLDDFDEYVYINGVIGSHTSNPITGDFAVEIQNSYYYKNGKIIPIKRGMFGGNIFEMFKEAIPLNDVEQRGKLISPSVVFKGEIIN</sequence>